<dbReference type="EMBL" id="BC045418">
    <property type="protein sequence ID" value="AAH45418.1"/>
    <property type="molecule type" value="mRNA"/>
</dbReference>
<dbReference type="RefSeq" id="NP_956257.1">
    <property type="nucleotide sequence ID" value="NM_199963.1"/>
</dbReference>
<dbReference type="SMR" id="Q7ZVT5"/>
<dbReference type="FunCoup" id="Q7ZVT5">
    <property type="interactions" value="1845"/>
</dbReference>
<dbReference type="STRING" id="7955.ENSDARP00000131656"/>
<dbReference type="PaxDb" id="7955-ENSDARP00000125914"/>
<dbReference type="DNASU" id="335642"/>
<dbReference type="GeneID" id="335642"/>
<dbReference type="KEGG" id="dre:335642"/>
<dbReference type="AGR" id="ZFIN:ZDB-GENE-030131-7582"/>
<dbReference type="CTD" id="79641"/>
<dbReference type="ZFIN" id="ZDB-GENE-030131-7582">
    <property type="gene designation" value="rogdi"/>
</dbReference>
<dbReference type="eggNOG" id="KOG3992">
    <property type="taxonomic scope" value="Eukaryota"/>
</dbReference>
<dbReference type="InParanoid" id="Q7ZVT5"/>
<dbReference type="OrthoDB" id="66510at2759"/>
<dbReference type="PhylomeDB" id="Q7ZVT5"/>
<dbReference type="PRO" id="PR:Q7ZVT5"/>
<dbReference type="Proteomes" id="UP000000437">
    <property type="component" value="Chromosome 3"/>
</dbReference>
<dbReference type="GO" id="GO:0030424">
    <property type="term" value="C:axon"/>
    <property type="evidence" value="ECO:0007669"/>
    <property type="project" value="UniProtKB-SubCell"/>
</dbReference>
<dbReference type="GO" id="GO:0030425">
    <property type="term" value="C:dendrite"/>
    <property type="evidence" value="ECO:0007669"/>
    <property type="project" value="UniProtKB-SubCell"/>
</dbReference>
<dbReference type="GO" id="GO:0005635">
    <property type="term" value="C:nuclear envelope"/>
    <property type="evidence" value="ECO:0007669"/>
    <property type="project" value="UniProtKB-SubCell"/>
</dbReference>
<dbReference type="GO" id="GO:0043204">
    <property type="term" value="C:perikaryon"/>
    <property type="evidence" value="ECO:0007669"/>
    <property type="project" value="UniProtKB-SubCell"/>
</dbReference>
<dbReference type="GO" id="GO:0043291">
    <property type="term" value="C:RAVE complex"/>
    <property type="evidence" value="ECO:0000318"/>
    <property type="project" value="GO_Central"/>
</dbReference>
<dbReference type="GO" id="GO:0008021">
    <property type="term" value="C:synaptic vesicle"/>
    <property type="evidence" value="ECO:0007669"/>
    <property type="project" value="UniProtKB-SubCell"/>
</dbReference>
<dbReference type="InterPro" id="IPR028241">
    <property type="entry name" value="RAVE2/Rogdi"/>
</dbReference>
<dbReference type="PANTHER" id="PTHR13618">
    <property type="entry name" value="LEUCINE ZIPPER CONTAINING TRANSCRIPTION FACTOR LZF1"/>
    <property type="match status" value="1"/>
</dbReference>
<dbReference type="PANTHER" id="PTHR13618:SF1">
    <property type="entry name" value="PROTEIN ROGDI HOMOLOG"/>
    <property type="match status" value="1"/>
</dbReference>
<dbReference type="Pfam" id="PF10259">
    <property type="entry name" value="Rogdi_lz"/>
    <property type="match status" value="1"/>
</dbReference>
<keyword id="KW-0966">Cell projection</keyword>
<keyword id="KW-0968">Cytoplasmic vesicle</keyword>
<keyword id="KW-0539">Nucleus</keyword>
<keyword id="KW-1185">Reference proteome</keyword>
<keyword id="KW-0770">Synapse</keyword>
<proteinExistence type="evidence at transcript level"/>
<name>ROGDI_DANRE</name>
<protein>
    <recommendedName>
        <fullName>Protein rogdi homolog</fullName>
    </recommendedName>
</protein>
<reference key="1">
    <citation type="submission" date="2003-01" db="EMBL/GenBank/DDBJ databases">
        <authorList>
            <consortium name="NIH - Zebrafish Gene Collection (ZGC) project"/>
        </authorList>
    </citation>
    <scope>NUCLEOTIDE SEQUENCE [LARGE SCALE MRNA]</scope>
    <source>
        <strain>AB</strain>
    </source>
</reference>
<gene>
    <name type="primary">rogdi</name>
    <name type="ORF">zgc:55665</name>
</gene>
<organism>
    <name type="scientific">Danio rerio</name>
    <name type="common">Zebrafish</name>
    <name type="synonym">Brachydanio rerio</name>
    <dbReference type="NCBI Taxonomy" id="7955"/>
    <lineage>
        <taxon>Eukaryota</taxon>
        <taxon>Metazoa</taxon>
        <taxon>Chordata</taxon>
        <taxon>Craniata</taxon>
        <taxon>Vertebrata</taxon>
        <taxon>Euteleostomi</taxon>
        <taxon>Actinopterygii</taxon>
        <taxon>Neopterygii</taxon>
        <taxon>Teleostei</taxon>
        <taxon>Ostariophysi</taxon>
        <taxon>Cypriniformes</taxon>
        <taxon>Danionidae</taxon>
        <taxon>Danioninae</taxon>
        <taxon>Danio</taxon>
    </lineage>
</organism>
<accession>Q7ZVT5</accession>
<feature type="chain" id="PRO_0000315668" description="Protein rogdi homolog">
    <location>
        <begin position="1"/>
        <end position="284"/>
    </location>
</feature>
<evidence type="ECO:0000250" key="1">
    <source>
        <dbReference type="UniProtKB" id="Q4V7D2"/>
    </source>
</evidence>
<evidence type="ECO:0000250" key="2">
    <source>
        <dbReference type="UniProtKB" id="Q9GZN7"/>
    </source>
</evidence>
<evidence type="ECO:0000305" key="3"/>
<sequence>MTAASQAERTVLEEEFNWLLKEEVHAVLKQLQDILKEASRRLSMPSPGLEGQLKQENFILGSSTMDQVKGVLTLQGEALTQADINIKVAKSSQVMHFAFRDDKQWKLQQIQDARNHVNQALQLLSSRDDSYHFKTGAEVNKLMDAIMLQLTRARNRLTTPASMTLPELAASGLMKMFTPPMPGDVMVNFYINLSKLCLTVYQLHVLQPNTTKNFKPAGSSVLHNPGAMFEHNNTKFEVSHVHKVECVVPWLNDTLVFFTISLQLCQQLKDKISVFSSFWNYRPF</sequence>
<comment type="subcellular location">
    <subcellularLocation>
        <location evidence="2">Nucleus envelope</location>
    </subcellularLocation>
    <subcellularLocation>
        <location evidence="1">Presynapse</location>
    </subcellularLocation>
    <subcellularLocation>
        <location evidence="1">Cell projection</location>
        <location evidence="1">Axon</location>
    </subcellularLocation>
    <subcellularLocation>
        <location evidence="1">Perikaryon</location>
    </subcellularLocation>
    <subcellularLocation>
        <location evidence="1">Cell projection</location>
        <location evidence="1">Dendrite</location>
    </subcellularLocation>
    <subcellularLocation>
        <location evidence="1">Cytoplasmic vesicle</location>
        <location evidence="1">Secretory vesicle</location>
        <location evidence="1">Synaptic vesicle</location>
    </subcellularLocation>
    <text evidence="1">Detected primarily at presynaptic sites on axons, and to a lesser degree in soma and dendrites. Not detected at post-synaptic sites.</text>
</comment>
<comment type="similarity">
    <text evidence="3">Belongs to the rogdi family.</text>
</comment>